<reference key="1">
    <citation type="journal article" date="2001" name="Proc. Natl. Acad. Sci. U.S.A.">
        <title>Complete genomic sequence of Pasteurella multocida Pm70.</title>
        <authorList>
            <person name="May B.J."/>
            <person name="Zhang Q."/>
            <person name="Li L.L."/>
            <person name="Paustian M.L."/>
            <person name="Whittam T.S."/>
            <person name="Kapur V."/>
        </authorList>
    </citation>
    <scope>NUCLEOTIDE SEQUENCE [LARGE SCALE GENOMIC DNA]</scope>
    <source>
        <strain>Pm70</strain>
    </source>
</reference>
<accession>P57979</accession>
<gene>
    <name evidence="1" type="primary">uvrA</name>
    <name type="ordered locus">PM1951</name>
</gene>
<feature type="chain" id="PRO_0000093076" description="UvrABC system protein A">
    <location>
        <begin position="1"/>
        <end position="943"/>
    </location>
</feature>
<feature type="domain" description="ABC transporter 1" evidence="1">
    <location>
        <begin position="310"/>
        <end position="587"/>
    </location>
</feature>
<feature type="domain" description="ABC transporter 2" evidence="1">
    <location>
        <begin position="607"/>
        <end position="937"/>
    </location>
</feature>
<feature type="zinc finger region" description="C4-type" evidence="1">
    <location>
        <begin position="253"/>
        <end position="280"/>
    </location>
</feature>
<feature type="zinc finger region" description="C4-type" evidence="1">
    <location>
        <begin position="740"/>
        <end position="766"/>
    </location>
</feature>
<feature type="binding site" evidence="1">
    <location>
        <begin position="31"/>
        <end position="38"/>
    </location>
    <ligand>
        <name>ATP</name>
        <dbReference type="ChEBI" id="CHEBI:30616"/>
    </ligand>
</feature>
<feature type="binding site" evidence="1">
    <location>
        <begin position="640"/>
        <end position="647"/>
    </location>
    <ligand>
        <name>ATP</name>
        <dbReference type="ChEBI" id="CHEBI:30616"/>
    </ligand>
</feature>
<proteinExistence type="inferred from homology"/>
<evidence type="ECO:0000255" key="1">
    <source>
        <dbReference type="HAMAP-Rule" id="MF_00205"/>
    </source>
</evidence>
<sequence>MDKIEVRGARTHNLKNINLTIPRDKLIVITGLSGSGKSSLAFDTLYAEGQRRYVESLSAYARQFLSLMEKPDVDHIEGLSPAISIEQKSTSHNPRSTVGTVTEIHDYLRLLFARVGEPRCPNHDVPLAAQTISQMVDKVLSLPEESKMMLLAPVVKERKGEHVKLLEQIAAQGYIRARIDGEICDLSDAPKLELHKKHTIEVVVDRFKVRSDLATRLAESFETALELSGGTAVVASMDEPETEELVFSANFACPHCGYSVPELEPRLFSFNNPAGACPTCDGLGVQQYFDEKRVVQNPSISLASGAVKGWDRRNFYYYQMLTSLAKHYEFDIESPFEALPKKIQQIILNGSGKEEIEFQYMNDRGDVVVRHHAFEGILNNMARRYKETESLSVREELAKNISTCPCHDCGGSRLRQEARHVYIGTTTLPDVAEKSIGETLHFFSELHLSGQRAQIAEKILKEIKERLQFLVNVGLDYLSLSRSAETLSGGEAQRIRLASQIGAGLVGVMYVLDEPSIGLHQRDNERLLNTLLHLRNLGNTVIVVEHDEDAIMAADHIIDIGPGAGVHGGQIVAEGSAKAIMANPHSITGKFLSGVEKIEIPAKRTALDKKKMLKLEGATGNNLKSVNLAIPVGLFTCVTGVSGSGKSTLINDTLFPLAQNALNRAENTQFAPYQSISGLEFFDKVIDIDQSPIGRTPRSNPATYTGLFTPIRELFAGVPESRARGYNPGRFSFNVRGGRCEACQGDGVIKVEMHFLPDVYVPCEQCKGKRYNRETLEIRYKGKTIHQVLEMTVEEAREFFDAIPQIARKLQTLMDVGLSYIRLGQSSTTLSGGEAQRVKLATELSKRDTGKTLYVLDEPTTGLHFADIKQLLTVLHRLRDQGNTIVVIEHNLDVIKTADWIIDLGPEGGNGGGQIIATGTPEQVAEVKGSHTARFLKTLLQKR</sequence>
<protein>
    <recommendedName>
        <fullName evidence="1">UvrABC system protein A</fullName>
        <shortName evidence="1">UvrA protein</shortName>
    </recommendedName>
    <alternativeName>
        <fullName evidence="1">Excinuclease ABC subunit A</fullName>
    </alternativeName>
</protein>
<name>UVRA_PASMU</name>
<keyword id="KW-0067">ATP-binding</keyword>
<keyword id="KW-0963">Cytoplasm</keyword>
<keyword id="KW-0227">DNA damage</keyword>
<keyword id="KW-0228">DNA excision</keyword>
<keyword id="KW-0234">DNA repair</keyword>
<keyword id="KW-0238">DNA-binding</keyword>
<keyword id="KW-0267">Excision nuclease</keyword>
<keyword id="KW-0479">Metal-binding</keyword>
<keyword id="KW-0547">Nucleotide-binding</keyword>
<keyword id="KW-1185">Reference proteome</keyword>
<keyword id="KW-0677">Repeat</keyword>
<keyword id="KW-0742">SOS response</keyword>
<keyword id="KW-0862">Zinc</keyword>
<keyword id="KW-0863">Zinc-finger</keyword>
<comment type="function">
    <text evidence="1">The UvrABC repair system catalyzes the recognition and processing of DNA lesions. UvrA is an ATPase and a DNA-binding protein. A damage recognition complex composed of 2 UvrA and 2 UvrB subunits scans DNA for abnormalities. When the presence of a lesion has been verified by UvrB, the UvrA molecules dissociate.</text>
</comment>
<comment type="subunit">
    <text evidence="1">Forms a heterotetramer with UvrB during the search for lesions.</text>
</comment>
<comment type="subcellular location">
    <subcellularLocation>
        <location evidence="1">Cytoplasm</location>
    </subcellularLocation>
</comment>
<comment type="similarity">
    <text evidence="1">Belongs to the ABC transporter superfamily. UvrA family.</text>
</comment>
<organism>
    <name type="scientific">Pasteurella multocida (strain Pm70)</name>
    <dbReference type="NCBI Taxonomy" id="272843"/>
    <lineage>
        <taxon>Bacteria</taxon>
        <taxon>Pseudomonadati</taxon>
        <taxon>Pseudomonadota</taxon>
        <taxon>Gammaproteobacteria</taxon>
        <taxon>Pasteurellales</taxon>
        <taxon>Pasteurellaceae</taxon>
        <taxon>Pasteurella</taxon>
    </lineage>
</organism>
<dbReference type="EMBL" id="AE004439">
    <property type="protein sequence ID" value="AAK04035.1"/>
    <property type="molecule type" value="Genomic_DNA"/>
</dbReference>
<dbReference type="RefSeq" id="WP_010907420.1">
    <property type="nucleotide sequence ID" value="NC_002663.1"/>
</dbReference>
<dbReference type="SMR" id="P57979"/>
<dbReference type="STRING" id="272843.PM1951"/>
<dbReference type="EnsemblBacteria" id="AAK04035">
    <property type="protein sequence ID" value="AAK04035"/>
    <property type="gene ID" value="PM1951"/>
</dbReference>
<dbReference type="KEGG" id="pmu:PM1951"/>
<dbReference type="HOGENOM" id="CLU_001370_0_2_6"/>
<dbReference type="OrthoDB" id="9809851at2"/>
<dbReference type="Proteomes" id="UP000000809">
    <property type="component" value="Chromosome"/>
</dbReference>
<dbReference type="GO" id="GO:0005737">
    <property type="term" value="C:cytoplasm"/>
    <property type="evidence" value="ECO:0007669"/>
    <property type="project" value="UniProtKB-SubCell"/>
</dbReference>
<dbReference type="GO" id="GO:0009380">
    <property type="term" value="C:excinuclease repair complex"/>
    <property type="evidence" value="ECO:0007669"/>
    <property type="project" value="InterPro"/>
</dbReference>
<dbReference type="GO" id="GO:0005524">
    <property type="term" value="F:ATP binding"/>
    <property type="evidence" value="ECO:0007669"/>
    <property type="project" value="UniProtKB-UniRule"/>
</dbReference>
<dbReference type="GO" id="GO:0016887">
    <property type="term" value="F:ATP hydrolysis activity"/>
    <property type="evidence" value="ECO:0007669"/>
    <property type="project" value="InterPro"/>
</dbReference>
<dbReference type="GO" id="GO:0003677">
    <property type="term" value="F:DNA binding"/>
    <property type="evidence" value="ECO:0007669"/>
    <property type="project" value="UniProtKB-UniRule"/>
</dbReference>
<dbReference type="GO" id="GO:0009381">
    <property type="term" value="F:excinuclease ABC activity"/>
    <property type="evidence" value="ECO:0007669"/>
    <property type="project" value="UniProtKB-UniRule"/>
</dbReference>
<dbReference type="GO" id="GO:0008270">
    <property type="term" value="F:zinc ion binding"/>
    <property type="evidence" value="ECO:0007669"/>
    <property type="project" value="UniProtKB-UniRule"/>
</dbReference>
<dbReference type="GO" id="GO:0006289">
    <property type="term" value="P:nucleotide-excision repair"/>
    <property type="evidence" value="ECO:0007669"/>
    <property type="project" value="UniProtKB-UniRule"/>
</dbReference>
<dbReference type="GO" id="GO:0009432">
    <property type="term" value="P:SOS response"/>
    <property type="evidence" value="ECO:0007669"/>
    <property type="project" value="UniProtKB-UniRule"/>
</dbReference>
<dbReference type="CDD" id="cd03270">
    <property type="entry name" value="ABC_UvrA_I"/>
    <property type="match status" value="1"/>
</dbReference>
<dbReference type="CDD" id="cd03271">
    <property type="entry name" value="ABC_UvrA_II"/>
    <property type="match status" value="1"/>
</dbReference>
<dbReference type="FunFam" id="1.10.8.280:FF:000001">
    <property type="entry name" value="UvrABC system protein A"/>
    <property type="match status" value="1"/>
</dbReference>
<dbReference type="FunFam" id="1.20.1580.10:FF:000002">
    <property type="entry name" value="UvrABC system protein A"/>
    <property type="match status" value="1"/>
</dbReference>
<dbReference type="FunFam" id="1.20.1580.10:FF:000003">
    <property type="entry name" value="UvrABC system protein A"/>
    <property type="match status" value="1"/>
</dbReference>
<dbReference type="FunFam" id="3.30.190.20:FF:000003">
    <property type="entry name" value="UvrABC system protein A"/>
    <property type="match status" value="1"/>
</dbReference>
<dbReference type="Gene3D" id="1.10.8.280">
    <property type="entry name" value="ABC transporter ATPase domain-like"/>
    <property type="match status" value="1"/>
</dbReference>
<dbReference type="Gene3D" id="1.20.1580.10">
    <property type="entry name" value="ABC transporter ATPase like domain"/>
    <property type="match status" value="2"/>
</dbReference>
<dbReference type="Gene3D" id="3.30.1490.20">
    <property type="entry name" value="ATP-grasp fold, A domain"/>
    <property type="match status" value="1"/>
</dbReference>
<dbReference type="Gene3D" id="3.40.50.300">
    <property type="entry name" value="P-loop containing nucleotide triphosphate hydrolases"/>
    <property type="match status" value="2"/>
</dbReference>
<dbReference type="HAMAP" id="MF_00205">
    <property type="entry name" value="UvrA"/>
    <property type="match status" value="1"/>
</dbReference>
<dbReference type="InterPro" id="IPR003439">
    <property type="entry name" value="ABC_transporter-like_ATP-bd"/>
</dbReference>
<dbReference type="InterPro" id="IPR017871">
    <property type="entry name" value="ABC_transporter-like_CS"/>
</dbReference>
<dbReference type="InterPro" id="IPR013815">
    <property type="entry name" value="ATP_grasp_subdomain_1"/>
</dbReference>
<dbReference type="InterPro" id="IPR027417">
    <property type="entry name" value="P-loop_NTPase"/>
</dbReference>
<dbReference type="InterPro" id="IPR004602">
    <property type="entry name" value="UvrA"/>
</dbReference>
<dbReference type="InterPro" id="IPR041552">
    <property type="entry name" value="UvrA_DNA-bd"/>
</dbReference>
<dbReference type="InterPro" id="IPR041102">
    <property type="entry name" value="UvrA_inter"/>
</dbReference>
<dbReference type="NCBIfam" id="NF001503">
    <property type="entry name" value="PRK00349.1"/>
    <property type="match status" value="1"/>
</dbReference>
<dbReference type="NCBIfam" id="TIGR00630">
    <property type="entry name" value="uvra"/>
    <property type="match status" value="1"/>
</dbReference>
<dbReference type="PANTHER" id="PTHR43152">
    <property type="entry name" value="UVRABC SYSTEM PROTEIN A"/>
    <property type="match status" value="1"/>
</dbReference>
<dbReference type="PANTHER" id="PTHR43152:SF3">
    <property type="entry name" value="UVRABC SYSTEM PROTEIN A"/>
    <property type="match status" value="1"/>
</dbReference>
<dbReference type="Pfam" id="PF17755">
    <property type="entry name" value="UvrA_DNA-bind"/>
    <property type="match status" value="1"/>
</dbReference>
<dbReference type="Pfam" id="PF17760">
    <property type="entry name" value="UvrA_inter"/>
    <property type="match status" value="1"/>
</dbReference>
<dbReference type="SUPFAM" id="SSF52540">
    <property type="entry name" value="P-loop containing nucleoside triphosphate hydrolases"/>
    <property type="match status" value="2"/>
</dbReference>
<dbReference type="PROSITE" id="PS00211">
    <property type="entry name" value="ABC_TRANSPORTER_1"/>
    <property type="match status" value="2"/>
</dbReference>
<dbReference type="PROSITE" id="PS50893">
    <property type="entry name" value="ABC_TRANSPORTER_2"/>
    <property type="match status" value="1"/>
</dbReference>